<dbReference type="EMBL" id="CP000142">
    <property type="protein sequence ID" value="ABA87952.1"/>
    <property type="molecule type" value="Genomic_DNA"/>
</dbReference>
<dbReference type="RefSeq" id="WP_011340395.1">
    <property type="nucleotide sequence ID" value="NC_007498.2"/>
</dbReference>
<dbReference type="SMR" id="Q3A6Q5"/>
<dbReference type="STRING" id="338963.Pcar_0693"/>
<dbReference type="KEGG" id="pca:Pcar_0693"/>
<dbReference type="eggNOG" id="COG0222">
    <property type="taxonomic scope" value="Bacteria"/>
</dbReference>
<dbReference type="HOGENOM" id="CLU_086499_3_2_7"/>
<dbReference type="OrthoDB" id="9811748at2"/>
<dbReference type="Proteomes" id="UP000002534">
    <property type="component" value="Chromosome"/>
</dbReference>
<dbReference type="GO" id="GO:0022625">
    <property type="term" value="C:cytosolic large ribosomal subunit"/>
    <property type="evidence" value="ECO:0007669"/>
    <property type="project" value="TreeGrafter"/>
</dbReference>
<dbReference type="GO" id="GO:0003729">
    <property type="term" value="F:mRNA binding"/>
    <property type="evidence" value="ECO:0007669"/>
    <property type="project" value="TreeGrafter"/>
</dbReference>
<dbReference type="GO" id="GO:0003735">
    <property type="term" value="F:structural constituent of ribosome"/>
    <property type="evidence" value="ECO:0007669"/>
    <property type="project" value="InterPro"/>
</dbReference>
<dbReference type="GO" id="GO:0006412">
    <property type="term" value="P:translation"/>
    <property type="evidence" value="ECO:0007669"/>
    <property type="project" value="UniProtKB-UniRule"/>
</dbReference>
<dbReference type="CDD" id="cd00387">
    <property type="entry name" value="Ribosomal_L7_L12"/>
    <property type="match status" value="1"/>
</dbReference>
<dbReference type="FunFam" id="1.20.5.710:FF:000008">
    <property type="entry name" value="50S ribosomal protein L7/L12"/>
    <property type="match status" value="1"/>
</dbReference>
<dbReference type="FunFam" id="3.30.1390.10:FF:000001">
    <property type="entry name" value="50S ribosomal protein L7/L12"/>
    <property type="match status" value="1"/>
</dbReference>
<dbReference type="Gene3D" id="3.30.1390.10">
    <property type="match status" value="1"/>
</dbReference>
<dbReference type="Gene3D" id="1.20.5.710">
    <property type="entry name" value="Single helix bin"/>
    <property type="match status" value="1"/>
</dbReference>
<dbReference type="HAMAP" id="MF_00368">
    <property type="entry name" value="Ribosomal_bL12"/>
    <property type="match status" value="1"/>
</dbReference>
<dbReference type="InterPro" id="IPR000206">
    <property type="entry name" value="Ribosomal_bL12"/>
</dbReference>
<dbReference type="InterPro" id="IPR013823">
    <property type="entry name" value="Ribosomal_bL12_C"/>
</dbReference>
<dbReference type="InterPro" id="IPR014719">
    <property type="entry name" value="Ribosomal_bL12_C/ClpS-like"/>
</dbReference>
<dbReference type="InterPro" id="IPR008932">
    <property type="entry name" value="Ribosomal_bL12_oligo"/>
</dbReference>
<dbReference type="InterPro" id="IPR036235">
    <property type="entry name" value="Ribosomal_bL12_oligo_N_sf"/>
</dbReference>
<dbReference type="NCBIfam" id="TIGR00855">
    <property type="entry name" value="L12"/>
    <property type="match status" value="1"/>
</dbReference>
<dbReference type="PANTHER" id="PTHR45987">
    <property type="entry name" value="39S RIBOSOMAL PROTEIN L12"/>
    <property type="match status" value="1"/>
</dbReference>
<dbReference type="PANTHER" id="PTHR45987:SF4">
    <property type="entry name" value="LARGE RIBOSOMAL SUBUNIT PROTEIN BL12M"/>
    <property type="match status" value="1"/>
</dbReference>
<dbReference type="Pfam" id="PF00542">
    <property type="entry name" value="Ribosomal_L12"/>
    <property type="match status" value="1"/>
</dbReference>
<dbReference type="Pfam" id="PF16320">
    <property type="entry name" value="Ribosomal_L12_N"/>
    <property type="match status" value="1"/>
</dbReference>
<dbReference type="SUPFAM" id="SSF54736">
    <property type="entry name" value="ClpS-like"/>
    <property type="match status" value="1"/>
</dbReference>
<dbReference type="SUPFAM" id="SSF48300">
    <property type="entry name" value="Ribosomal protein L7/12, oligomerisation (N-terminal) domain"/>
    <property type="match status" value="1"/>
</dbReference>
<accession>Q3A6Q5</accession>
<proteinExistence type="inferred from homology"/>
<sequence>MADITKEQVVSFIENMSVLELAELVKELEEKFGVSAAAPVAVAAAPGAAAGAAAAEEKDEFDVVLKSAGDKKINVIKVVRAATGLGLKEAKDMVDGAPQTIKEAMPKAEAEELKKQLEEAGAAVELK</sequence>
<name>RL7_SYNC1</name>
<feature type="chain" id="PRO_0000243460" description="Large ribosomal subunit protein bL12">
    <location>
        <begin position="1"/>
        <end position="127"/>
    </location>
</feature>
<organism>
    <name type="scientific">Syntrophotalea carbinolica (strain DSM 2380 / NBRC 103641 / GraBd1)</name>
    <name type="common">Pelobacter carbinolicus</name>
    <dbReference type="NCBI Taxonomy" id="338963"/>
    <lineage>
        <taxon>Bacteria</taxon>
        <taxon>Pseudomonadati</taxon>
        <taxon>Thermodesulfobacteriota</taxon>
        <taxon>Desulfuromonadia</taxon>
        <taxon>Desulfuromonadales</taxon>
        <taxon>Syntrophotaleaceae</taxon>
        <taxon>Syntrophotalea</taxon>
    </lineage>
</organism>
<gene>
    <name evidence="1" type="primary">rplL</name>
    <name type="ordered locus">Pcar_0693</name>
</gene>
<comment type="function">
    <text evidence="1">Forms part of the ribosomal stalk which helps the ribosome interact with GTP-bound translation factors. Is thus essential for accurate translation.</text>
</comment>
<comment type="subunit">
    <text evidence="1">Homodimer. Part of the ribosomal stalk of the 50S ribosomal subunit. Forms a multimeric L10(L12)X complex, where L10 forms an elongated spine to which 2 to 4 L12 dimers bind in a sequential fashion. Binds GTP-bound translation factors.</text>
</comment>
<comment type="similarity">
    <text evidence="1">Belongs to the bacterial ribosomal protein bL12 family.</text>
</comment>
<protein>
    <recommendedName>
        <fullName evidence="1">Large ribosomal subunit protein bL12</fullName>
    </recommendedName>
    <alternativeName>
        <fullName evidence="2">50S ribosomal protein L7/L12</fullName>
    </alternativeName>
</protein>
<reference key="1">
    <citation type="submission" date="2005-10" db="EMBL/GenBank/DDBJ databases">
        <title>Complete sequence of Pelobacter carbinolicus DSM 2380.</title>
        <authorList>
            <person name="Copeland A."/>
            <person name="Lucas S."/>
            <person name="Lapidus A."/>
            <person name="Barry K."/>
            <person name="Detter J.C."/>
            <person name="Glavina T."/>
            <person name="Hammon N."/>
            <person name="Israni S."/>
            <person name="Pitluck S."/>
            <person name="Chertkov O."/>
            <person name="Schmutz J."/>
            <person name="Larimer F."/>
            <person name="Land M."/>
            <person name="Kyrpides N."/>
            <person name="Ivanova N."/>
            <person name="Richardson P."/>
        </authorList>
    </citation>
    <scope>NUCLEOTIDE SEQUENCE [LARGE SCALE GENOMIC DNA]</scope>
    <source>
        <strain>DSM 2380 / NBRC 103641 / GraBd1</strain>
    </source>
</reference>
<keyword id="KW-1185">Reference proteome</keyword>
<keyword id="KW-0687">Ribonucleoprotein</keyword>
<keyword id="KW-0689">Ribosomal protein</keyword>
<evidence type="ECO:0000255" key="1">
    <source>
        <dbReference type="HAMAP-Rule" id="MF_00368"/>
    </source>
</evidence>
<evidence type="ECO:0000305" key="2"/>